<evidence type="ECO:0000250" key="1">
    <source>
        <dbReference type="UniProtKB" id="O35696"/>
    </source>
</evidence>
<evidence type="ECO:0000250" key="2">
    <source>
        <dbReference type="UniProtKB" id="O43173"/>
    </source>
</evidence>
<evidence type="ECO:0000250" key="3">
    <source>
        <dbReference type="UniProtKB" id="Q92186"/>
    </source>
</evidence>
<evidence type="ECO:0000255" key="4"/>
<evidence type="ECO:0000269" key="5">
    <source>
    </source>
</evidence>
<evidence type="ECO:0000305" key="6"/>
<evidence type="ECO:0000312" key="7">
    <source>
        <dbReference type="RGD" id="621843"/>
    </source>
</evidence>
<keyword id="KW-1003">Cell membrane</keyword>
<keyword id="KW-1015">Disulfide bond</keyword>
<keyword id="KW-0325">Glycoprotein</keyword>
<keyword id="KW-0328">Glycosyltransferase</keyword>
<keyword id="KW-0333">Golgi apparatus</keyword>
<keyword id="KW-0472">Membrane</keyword>
<keyword id="KW-0547">Nucleotide-binding</keyword>
<keyword id="KW-1185">Reference proteome</keyword>
<keyword id="KW-0964">Secreted</keyword>
<keyword id="KW-0735">Signal-anchor</keyword>
<keyword id="KW-0808">Transferase</keyword>
<keyword id="KW-0812">Transmembrane</keyword>
<keyword id="KW-1133">Transmembrane helix</keyword>
<name>SIA8B_RAT</name>
<accession>Q07977</accession>
<accession>Q64688</accession>
<reference key="1">
    <citation type="journal article" date="1993" name="J. Biol. Chem.">
        <title>Polymerase chain reaction cloning of a developmentally regulated member of the sialyltransferase gene family.</title>
        <authorList>
            <person name="Livingston B.D."/>
            <person name="Paulson J.C."/>
        </authorList>
    </citation>
    <scope>NUCLEOTIDE SEQUENCE [MRNA]</scope>
    <scope>TISSUE SPECIFICITY</scope>
    <scope>DEVELOPMENTAL STAGE</scope>
    <source>
        <strain>Sprague-Dawley</strain>
        <tissue>Brain</tissue>
    </source>
</reference>
<dbReference type="EC" id="2.4.3.-" evidence="3"/>
<dbReference type="EMBL" id="L13445">
    <property type="protein sequence ID" value="AAA42147.1"/>
    <property type="molecule type" value="mRNA"/>
</dbReference>
<dbReference type="PIR" id="A46727">
    <property type="entry name" value="A46727"/>
</dbReference>
<dbReference type="RefSeq" id="NP_476497.1">
    <property type="nucleotide sequence ID" value="NM_057156.2"/>
</dbReference>
<dbReference type="SMR" id="Q07977"/>
<dbReference type="FunCoup" id="Q07977">
    <property type="interactions" value="516"/>
</dbReference>
<dbReference type="CAZy" id="GT29">
    <property type="family name" value="Glycosyltransferase Family 29"/>
</dbReference>
<dbReference type="GlyCosmos" id="Q07977">
    <property type="glycosylation" value="6 sites, No reported glycans"/>
</dbReference>
<dbReference type="GlyGen" id="Q07977">
    <property type="glycosylation" value="6 sites"/>
</dbReference>
<dbReference type="iPTMnet" id="Q07977"/>
<dbReference type="PhosphoSitePlus" id="Q07977"/>
<dbReference type="Ensembl" id="ENSRNOT00000113519.1">
    <property type="protein sequence ID" value="ENSRNOP00000092932.1"/>
    <property type="gene ID" value="ENSRNOG00000065528.1"/>
</dbReference>
<dbReference type="GeneID" id="117523"/>
<dbReference type="KEGG" id="rno:117523"/>
<dbReference type="UCSC" id="RGD:621843">
    <property type="organism name" value="rat"/>
</dbReference>
<dbReference type="AGR" id="RGD:621843"/>
<dbReference type="CTD" id="8128"/>
<dbReference type="RGD" id="621843">
    <property type="gene designation" value="St8sia2"/>
</dbReference>
<dbReference type="GeneTree" id="ENSGT01030000234535"/>
<dbReference type="InParanoid" id="Q07977"/>
<dbReference type="OMA" id="ATRFCNT"/>
<dbReference type="OrthoDB" id="16704at9989"/>
<dbReference type="PhylomeDB" id="Q07977"/>
<dbReference type="Reactome" id="R-RNO-4085001">
    <property type="pathway name" value="Sialic acid metabolism"/>
</dbReference>
<dbReference type="Reactome" id="R-RNO-419037">
    <property type="pathway name" value="NCAM1 interactions"/>
</dbReference>
<dbReference type="Reactome" id="R-RNO-975577">
    <property type="pathway name" value="N-Glycan antennae elongation"/>
</dbReference>
<dbReference type="UniPathway" id="UPA00378"/>
<dbReference type="PRO" id="PR:Q07977"/>
<dbReference type="Proteomes" id="UP000002494">
    <property type="component" value="Chromosome 1"/>
</dbReference>
<dbReference type="GO" id="GO:0005829">
    <property type="term" value="C:cytosol"/>
    <property type="evidence" value="ECO:0007669"/>
    <property type="project" value="Ensembl"/>
</dbReference>
<dbReference type="GO" id="GO:0005769">
    <property type="term" value="C:early endosome"/>
    <property type="evidence" value="ECO:0000266"/>
    <property type="project" value="RGD"/>
</dbReference>
<dbReference type="GO" id="GO:0005576">
    <property type="term" value="C:extracellular region"/>
    <property type="evidence" value="ECO:0000250"/>
    <property type="project" value="UniProtKB"/>
</dbReference>
<dbReference type="GO" id="GO:0005794">
    <property type="term" value="C:Golgi apparatus"/>
    <property type="evidence" value="ECO:0000250"/>
    <property type="project" value="UniProtKB"/>
</dbReference>
<dbReference type="GO" id="GO:0000139">
    <property type="term" value="C:Golgi membrane"/>
    <property type="evidence" value="ECO:0007669"/>
    <property type="project" value="UniProtKB-SubCell"/>
</dbReference>
<dbReference type="GO" id="GO:0005654">
    <property type="term" value="C:nucleoplasm"/>
    <property type="evidence" value="ECO:0007669"/>
    <property type="project" value="Ensembl"/>
</dbReference>
<dbReference type="GO" id="GO:0048471">
    <property type="term" value="C:perinuclear region of cytoplasm"/>
    <property type="evidence" value="ECO:0000314"/>
    <property type="project" value="RGD"/>
</dbReference>
<dbReference type="GO" id="GO:0005886">
    <property type="term" value="C:plasma membrane"/>
    <property type="evidence" value="ECO:0007669"/>
    <property type="project" value="UniProtKB-SubCell"/>
</dbReference>
<dbReference type="GO" id="GO:0055037">
    <property type="term" value="C:recycling endosome"/>
    <property type="evidence" value="ECO:0000266"/>
    <property type="project" value="RGD"/>
</dbReference>
<dbReference type="GO" id="GO:0003828">
    <property type="term" value="F:alpha-N-acetylneuraminate alpha-2,8-sialyltransferase activity"/>
    <property type="evidence" value="ECO:0000250"/>
    <property type="project" value="UniProtKB"/>
</dbReference>
<dbReference type="GO" id="GO:0000166">
    <property type="term" value="F:nucleotide binding"/>
    <property type="evidence" value="ECO:0007669"/>
    <property type="project" value="UniProtKB-KW"/>
</dbReference>
<dbReference type="GO" id="GO:0008373">
    <property type="term" value="F:sialyltransferase activity"/>
    <property type="evidence" value="ECO:0000315"/>
    <property type="project" value="RGD"/>
</dbReference>
<dbReference type="GO" id="GO:0001574">
    <property type="term" value="P:ganglioside biosynthetic process"/>
    <property type="evidence" value="ECO:0000266"/>
    <property type="project" value="RGD"/>
</dbReference>
<dbReference type="GO" id="GO:0006491">
    <property type="term" value="P:N-glycan processing"/>
    <property type="evidence" value="ECO:0000266"/>
    <property type="project" value="RGD"/>
</dbReference>
<dbReference type="GO" id="GO:0030182">
    <property type="term" value="P:neuron differentiation"/>
    <property type="evidence" value="ECO:0000270"/>
    <property type="project" value="RGD"/>
</dbReference>
<dbReference type="GO" id="GO:1990138">
    <property type="term" value="P:neuron projection extension"/>
    <property type="evidence" value="ECO:0000315"/>
    <property type="project" value="RGD"/>
</dbReference>
<dbReference type="GO" id="GO:0009311">
    <property type="term" value="P:oligosaccharide metabolic process"/>
    <property type="evidence" value="ECO:0000266"/>
    <property type="project" value="RGD"/>
</dbReference>
<dbReference type="GO" id="GO:0043525">
    <property type="term" value="P:positive regulation of neuron apoptotic process"/>
    <property type="evidence" value="ECO:0000314"/>
    <property type="project" value="RGD"/>
</dbReference>
<dbReference type="GO" id="GO:0051965">
    <property type="term" value="P:positive regulation of synapse assembly"/>
    <property type="evidence" value="ECO:0000315"/>
    <property type="project" value="RGD"/>
</dbReference>
<dbReference type="GO" id="GO:0006486">
    <property type="term" value="P:protein glycosylation"/>
    <property type="evidence" value="ECO:0000266"/>
    <property type="project" value="RGD"/>
</dbReference>
<dbReference type="GO" id="GO:0042220">
    <property type="term" value="P:response to cocaine"/>
    <property type="evidence" value="ECO:0000270"/>
    <property type="project" value="RGD"/>
</dbReference>
<dbReference type="GO" id="GO:0097503">
    <property type="term" value="P:sialylation"/>
    <property type="evidence" value="ECO:0000250"/>
    <property type="project" value="UniProtKB"/>
</dbReference>
<dbReference type="CDD" id="cd23987">
    <property type="entry name" value="GT29_ST8SIA2"/>
    <property type="match status" value="1"/>
</dbReference>
<dbReference type="FunFam" id="3.90.1480.20:FF:000001">
    <property type="entry name" value="ST8 alpha-N-acetyl-neuraminide alpha-2,8-sialyltransferase 2"/>
    <property type="match status" value="1"/>
</dbReference>
<dbReference type="Gene3D" id="3.90.1480.20">
    <property type="entry name" value="Glycosyl transferase family 29"/>
    <property type="match status" value="1"/>
</dbReference>
<dbReference type="InterPro" id="IPR001675">
    <property type="entry name" value="Glyco_trans_29"/>
</dbReference>
<dbReference type="InterPro" id="IPR050943">
    <property type="entry name" value="Glycosyltr_29_Sialyltrsf"/>
</dbReference>
<dbReference type="InterPro" id="IPR038578">
    <property type="entry name" value="GT29-like_sf"/>
</dbReference>
<dbReference type="InterPro" id="IPR012163">
    <property type="entry name" value="Sialyl_trans"/>
</dbReference>
<dbReference type="PANTHER" id="PTHR11987">
    <property type="entry name" value="ALPHA-2,8-SIALYLTRANSFERASE"/>
    <property type="match status" value="1"/>
</dbReference>
<dbReference type="PANTHER" id="PTHR11987:SF30">
    <property type="entry name" value="ALPHA-2,8-SIALYLTRANSFERASE 8B"/>
    <property type="match status" value="1"/>
</dbReference>
<dbReference type="Pfam" id="PF00777">
    <property type="entry name" value="Glyco_transf_29"/>
    <property type="match status" value="1"/>
</dbReference>
<dbReference type="PIRSF" id="PIRSF005557">
    <property type="entry name" value="Sialyl_trans"/>
    <property type="match status" value="1"/>
</dbReference>
<protein>
    <recommendedName>
        <fullName evidence="6">Alpha-2,8-sialyltransferase 8B</fullName>
        <ecNumber evidence="3">2.4.3.-</ecNumber>
    </recommendedName>
    <alternativeName>
        <fullName>Sialyltransferase 8B</fullName>
        <shortName>SIAT8-B</shortName>
    </alternativeName>
    <alternativeName>
        <fullName>Sialyltransferase St8Sia II</fullName>
        <shortName>ST8SiaII</shortName>
    </alternativeName>
    <alternativeName>
        <fullName evidence="3">Sialyltransferase X</fullName>
        <shortName evidence="3">STX</shortName>
    </alternativeName>
</protein>
<feature type="chain" id="PRO_0000149288" description="Alpha-2,8-sialyltransferase 8B">
    <location>
        <begin position="1"/>
        <end position="375"/>
    </location>
</feature>
<feature type="topological domain" description="Cytoplasmic" evidence="4">
    <location>
        <begin position="1"/>
        <end position="6"/>
    </location>
</feature>
<feature type="transmembrane region" description="Helical; Signal-anchor for type II membrane protein" evidence="4">
    <location>
        <begin position="7"/>
        <end position="23"/>
    </location>
</feature>
<feature type="topological domain" description="Lumenal" evidence="4">
    <location>
        <begin position="24"/>
        <end position="375"/>
    </location>
</feature>
<feature type="active site" description="Proton donor/acceptor" evidence="2">
    <location>
        <position position="346"/>
    </location>
</feature>
<feature type="binding site" evidence="2">
    <location>
        <position position="162"/>
    </location>
    <ligand>
        <name>CMP-N-acetyl-beta-neuraminate</name>
        <dbReference type="ChEBI" id="CHEBI:57812"/>
    </ligand>
</feature>
<feature type="binding site" evidence="2">
    <location>
        <position position="185"/>
    </location>
    <ligand>
        <name>CMP-N-acetyl-beta-neuraminate</name>
        <dbReference type="ChEBI" id="CHEBI:57812"/>
    </ligand>
</feature>
<feature type="binding site" evidence="2">
    <location>
        <position position="294"/>
    </location>
    <ligand>
        <name>CMP-N-acetyl-beta-neuraminate</name>
        <dbReference type="ChEBI" id="CHEBI:57812"/>
    </ligand>
</feature>
<feature type="binding site" evidence="2">
    <location>
        <position position="295"/>
    </location>
    <ligand>
        <name>CMP-N-acetyl-beta-neuraminate</name>
        <dbReference type="ChEBI" id="CHEBI:57812"/>
    </ligand>
</feature>
<feature type="binding site" evidence="2">
    <location>
        <position position="296"/>
    </location>
    <ligand>
        <name>CMP-N-acetyl-beta-neuraminate</name>
        <dbReference type="ChEBI" id="CHEBI:57812"/>
    </ligand>
</feature>
<feature type="binding site" evidence="2">
    <location>
        <position position="316"/>
    </location>
    <ligand>
        <name>CMP-N-acetyl-beta-neuraminate</name>
        <dbReference type="ChEBI" id="CHEBI:57812"/>
    </ligand>
</feature>
<feature type="binding site" evidence="2">
    <location>
        <position position="329"/>
    </location>
    <ligand>
        <name>CMP-N-acetyl-beta-neuraminate</name>
        <dbReference type="ChEBI" id="CHEBI:57812"/>
    </ligand>
</feature>
<feature type="binding site" evidence="2">
    <location>
        <position position="330"/>
    </location>
    <ligand>
        <name>CMP-N-acetyl-beta-neuraminate</name>
        <dbReference type="ChEBI" id="CHEBI:57812"/>
    </ligand>
</feature>
<feature type="glycosylation site" description="N-linked (GlcNAc...) asparagine" evidence="4">
    <location>
        <position position="60"/>
    </location>
</feature>
<feature type="glycosylation site" description="N-linked (GlcNAc...) asparagine" evidence="4">
    <location>
        <position position="72"/>
    </location>
</feature>
<feature type="glycosylation site" description="N-linked (GlcNAc...) asparagine" evidence="4">
    <location>
        <position position="89"/>
    </location>
</feature>
<feature type="glycosylation site" description="N-linked (GlcNAc...) asparagine" evidence="4">
    <location>
        <position position="134"/>
    </location>
</feature>
<feature type="glycosylation site" description="N-linked (GlcNAc...) asparagine" evidence="4">
    <location>
        <position position="219"/>
    </location>
</feature>
<feature type="glycosylation site" description="N-linked (GlcNAc...) asparagine" evidence="4">
    <location>
        <position position="234"/>
    </location>
</feature>
<feature type="disulfide bond" evidence="2">
    <location>
        <begin position="157"/>
        <end position="307"/>
    </location>
</feature>
<feature type="disulfide bond" evidence="2">
    <location>
        <begin position="171"/>
        <end position="371"/>
    </location>
</feature>
<proteinExistence type="evidence at transcript level"/>
<sequence>MQLQFRSWMLAALTLLVVFLIFADISEIEEEIGNSGGRGTIRSAVNSLHSKSNRAEVVINGSSLPAVADRSNESLKHSIQPASSKWRHNQTLSLRIRKQILKFLDAEKDISVLKGTLKPGDIIHYIFDRDSTMNVSQNLYELLPRTSPLKNKHFQTCAIVGNSGVLLNSGCGQEIDTHSFVIRCNLAPVQEYARDVGLKTDLVTMNPSVIQRAFEDLVNATWREKLLQRLHGLNGSILWIPAFMARGGKERVEWVNALILKHHVNVRTAYPSLRLLHAVRGYWLTNKVHIKRPTTGLLMYTLATRFCNQIYLYGFWPFPLDQNQNPVKYHYYDSLKYGYTSQASPHTMPLEFKALKSLHEQGALKLTVGQCDGAT</sequence>
<organism>
    <name type="scientific">Rattus norvegicus</name>
    <name type="common">Rat</name>
    <dbReference type="NCBI Taxonomy" id="10116"/>
    <lineage>
        <taxon>Eukaryota</taxon>
        <taxon>Metazoa</taxon>
        <taxon>Chordata</taxon>
        <taxon>Craniata</taxon>
        <taxon>Vertebrata</taxon>
        <taxon>Euteleostomi</taxon>
        <taxon>Mammalia</taxon>
        <taxon>Eutheria</taxon>
        <taxon>Euarchontoglires</taxon>
        <taxon>Glires</taxon>
        <taxon>Rodentia</taxon>
        <taxon>Myomorpha</taxon>
        <taxon>Muroidea</taxon>
        <taxon>Muridae</taxon>
        <taxon>Murinae</taxon>
        <taxon>Rattus</taxon>
    </lineage>
</organism>
<gene>
    <name evidence="7" type="primary">St8sia2</name>
    <name type="synonym">Siat8b</name>
    <name evidence="3" type="synonym">Stx</name>
</gene>
<comment type="function">
    <text evidence="1 3">Catalyzes the transfer of a sialic acid from a CMP-linked sialic acid donor onto a terminal alpha-2,3-, alpha-2,6-, or alpha-2,8-linked sialic acid of an N-linked glycan acceptor through alpha-2,8-linkages. Therefore, participates in polysialic acid synthesis on various sialylated N-acetyllactosaminyl oligosaccharides (alpha-2,3-, alpha-2,6-, or alpha-2,8-linked sialic acid), including NCAM1, NCAM1 N-glycans, FETUB N-glycans, and to a lesser extent sialylparagloboside (SPG) and AHSG, which does not require the initial addition of an alpha 2,8-sialic acid (By similarity). However, does not exhibit sialic acid-polymerase activity (By similarity). Catalyzes polysialic acid synthesis in the hippocampal on NCAM1 and supports neurite outgrowth (By similarity). ST8SIA2-mediated polysialylation influences on oligodendrocyte differentiation and may promote the integrity of myelin and axons (By similarity).</text>
</comment>
<comment type="catalytic activity">
    <reaction evidence="3">
        <text>[N-acetyl-alpha-D-neuraminosyl-(2-&gt;8)](n) + CMP-N-acetyl-beta-neuraminate = [N-acetyl-alpha-D-neuraminosyl-(2-&gt;8)](n+1) + CMP + H(+)</text>
        <dbReference type="Rhea" id="RHEA:77367"/>
        <dbReference type="Rhea" id="RHEA-COMP:14315"/>
        <dbReference type="Rhea" id="RHEA-COMP:18878"/>
        <dbReference type="ChEBI" id="CHEBI:15378"/>
        <dbReference type="ChEBI" id="CHEBI:57812"/>
        <dbReference type="ChEBI" id="CHEBI:60377"/>
        <dbReference type="ChEBI" id="CHEBI:139252"/>
    </reaction>
    <physiologicalReaction direction="left-to-right" evidence="3">
        <dbReference type="Rhea" id="RHEA:77368"/>
    </physiologicalReaction>
</comment>
<comment type="pathway">
    <text evidence="3">Protein modification; protein glycosylation.</text>
</comment>
<comment type="subcellular location">
    <subcellularLocation>
        <location evidence="3">Golgi apparatus membrane</location>
        <topology evidence="3">Single-pass type II membrane protein</topology>
    </subcellularLocation>
    <subcellularLocation>
        <location evidence="3">Secreted</location>
    </subcellularLocation>
    <subcellularLocation>
        <location evidence="3">Cell membrane</location>
    </subcellularLocation>
    <text evidence="3">Also trafficks to the cell surface.</text>
</comment>
<comment type="tissue specificity">
    <text evidence="5">Expressed only in newborn brain.</text>
</comment>
<comment type="developmental stage">
    <text evidence="5">Newborn.</text>
</comment>
<comment type="PTM">
    <text evidence="3">Autopolysialylated. Autopolysialylation is not a prerequisite for the polysialylation acitity, but enhances the polysialylation acitity.</text>
</comment>
<comment type="similarity">
    <text evidence="6">Belongs to the glycosyltransferase 29 family.</text>
</comment>